<feature type="chain" id="PRO_0000161721" description="Toxic phospholipase A2" evidence="4">
    <location>
        <begin position="1"/>
        <end position="32" status="greater than"/>
    </location>
</feature>
<feature type="non-terminal residue" evidence="7">
    <location>
        <position position="32"/>
    </location>
</feature>
<proteinExistence type="evidence at protein level"/>
<evidence type="ECO:0000250" key="1"/>
<evidence type="ECO:0000255" key="2">
    <source>
        <dbReference type="PROSITE-ProRule" id="PRU10035"/>
    </source>
</evidence>
<evidence type="ECO:0000255" key="3">
    <source>
        <dbReference type="PROSITE-ProRule" id="PRU10036"/>
    </source>
</evidence>
<evidence type="ECO:0000269" key="4">
    <source>
    </source>
</evidence>
<evidence type="ECO:0000303" key="5">
    <source>
    </source>
</evidence>
<evidence type="ECO:0000305" key="6"/>
<evidence type="ECO:0000305" key="7">
    <source>
    </source>
</evidence>
<dbReference type="EC" id="3.1.1.4"/>
<dbReference type="PIR" id="S58413">
    <property type="entry name" value="S58413"/>
</dbReference>
<dbReference type="SMR" id="P43318"/>
<dbReference type="GO" id="GO:0005576">
    <property type="term" value="C:extracellular region"/>
    <property type="evidence" value="ECO:0007669"/>
    <property type="project" value="UniProtKB-SubCell"/>
</dbReference>
<dbReference type="GO" id="GO:0042151">
    <property type="term" value="C:nematocyst"/>
    <property type="evidence" value="ECO:0007669"/>
    <property type="project" value="UniProtKB-SubCell"/>
</dbReference>
<dbReference type="GO" id="GO:0004623">
    <property type="term" value="F:phospholipase A2 activity"/>
    <property type="evidence" value="ECO:0007669"/>
    <property type="project" value="UniProtKB-EC"/>
</dbReference>
<dbReference type="GO" id="GO:0090729">
    <property type="term" value="F:toxin activity"/>
    <property type="evidence" value="ECO:0007669"/>
    <property type="project" value="UniProtKB-KW"/>
</dbReference>
<dbReference type="GO" id="GO:0050482">
    <property type="term" value="P:arachidonate secretion"/>
    <property type="evidence" value="ECO:0007669"/>
    <property type="project" value="InterPro"/>
</dbReference>
<dbReference type="GO" id="GO:0016042">
    <property type="term" value="P:lipid catabolic process"/>
    <property type="evidence" value="ECO:0007669"/>
    <property type="project" value="UniProtKB-KW"/>
</dbReference>
<dbReference type="GO" id="GO:0006644">
    <property type="term" value="P:phospholipid metabolic process"/>
    <property type="evidence" value="ECO:0007669"/>
    <property type="project" value="InterPro"/>
</dbReference>
<dbReference type="Gene3D" id="1.20.90.10">
    <property type="entry name" value="Phospholipase A2 domain"/>
    <property type="match status" value="1"/>
</dbReference>
<dbReference type="InterPro" id="IPR016090">
    <property type="entry name" value="PLipase_A2_dom"/>
</dbReference>
<dbReference type="InterPro" id="IPR036444">
    <property type="entry name" value="PLipase_A2_dom_sf"/>
</dbReference>
<dbReference type="PANTHER" id="PTHR12253">
    <property type="entry name" value="RH14732P"/>
    <property type="match status" value="1"/>
</dbReference>
<dbReference type="Pfam" id="PF05826">
    <property type="entry name" value="Phospholip_A2_2"/>
    <property type="match status" value="1"/>
</dbReference>
<dbReference type="SUPFAM" id="SSF48619">
    <property type="entry name" value="Phospholipase A2, PLA2"/>
    <property type="match status" value="1"/>
</dbReference>
<protein>
    <recommendedName>
        <fullName evidence="5">Toxic phospholipase A2</fullName>
        <shortName>PLA2</shortName>
        <ecNumber>3.1.1.4</ecNumber>
    </recommendedName>
    <alternativeName>
        <fullName>Phosphatidylcholine 2-acylhydrolase</fullName>
    </alternativeName>
</protein>
<sequence length="32" mass="3402">GLIKPGTLWCGMGNNAETYDQLGPFADVDSCK</sequence>
<comment type="function">
    <text evidence="1">PLA2 catalyzes the calcium-dependent hydrolysis of the 2-acyl groups in 3-sn-phosphoglycerides.</text>
</comment>
<comment type="catalytic activity">
    <reaction evidence="2 3">
        <text>a 1,2-diacyl-sn-glycero-3-phosphocholine + H2O = a 1-acyl-sn-glycero-3-phosphocholine + a fatty acid + H(+)</text>
        <dbReference type="Rhea" id="RHEA:15801"/>
        <dbReference type="ChEBI" id="CHEBI:15377"/>
        <dbReference type="ChEBI" id="CHEBI:15378"/>
        <dbReference type="ChEBI" id="CHEBI:28868"/>
        <dbReference type="ChEBI" id="CHEBI:57643"/>
        <dbReference type="ChEBI" id="CHEBI:58168"/>
        <dbReference type="EC" id="3.1.1.4"/>
    </reaction>
</comment>
<comment type="cofactor">
    <cofactor evidence="1">
        <name>Ca(2+)</name>
        <dbReference type="ChEBI" id="CHEBI:29108"/>
    </cofactor>
    <text evidence="1">Binds 1 Ca(2+) ion per subunit.</text>
</comment>
<comment type="subcellular location">
    <subcellularLocation>
        <location evidence="4">Secreted</location>
    </subcellularLocation>
    <subcellularLocation>
        <location evidence="4">Nematocyst</location>
    </subcellularLocation>
</comment>
<comment type="toxic dose">
    <text evidence="4">LD(50) is 6 ug/g by injection.</text>
</comment>
<comment type="similarity">
    <text evidence="6">Belongs to the phospholipase A2 family. Group III subfamily.</text>
</comment>
<organism>
    <name type="scientific">Rhopilema nomadica</name>
    <name type="common">Mediteranean medusa</name>
    <dbReference type="NCBI Taxonomy" id="42738"/>
    <lineage>
        <taxon>Eukaryota</taxon>
        <taxon>Metazoa</taxon>
        <taxon>Cnidaria</taxon>
        <taxon>Scyphozoa</taxon>
        <taxon>Rhizostomeae</taxon>
        <taxon>Rhizostomatidae</taxon>
        <taxon>Rhopilema</taxon>
    </lineage>
</organism>
<reference key="1">
    <citation type="journal article" date="1995" name="Nature">
        <title>Delivery of a nematocyst toxin.</title>
        <authorList>
            <person name="Lotan A."/>
            <person name="Fishman L."/>
            <person name="Loya Y."/>
            <person name="Zlotkin E."/>
        </authorList>
    </citation>
    <scope>PROTEIN SEQUENCE</scope>
    <scope>SUBCELLULAR LOCATION</scope>
    <source>
        <tissue>Tentacle</tissue>
    </source>
</reference>
<keyword id="KW-0903">Direct protein sequencing</keyword>
<keyword id="KW-0378">Hydrolase</keyword>
<keyword id="KW-0442">Lipid degradation</keyword>
<keyword id="KW-0443">Lipid metabolism</keyword>
<keyword id="KW-0166">Nematocyst</keyword>
<keyword id="KW-0964">Secreted</keyword>
<keyword id="KW-0800">Toxin</keyword>
<accession>P43318</accession>
<name>PA2_RHONO</name>